<accession>Q8KCC0</accession>
<reference key="1">
    <citation type="journal article" date="2002" name="Proc. Natl. Acad. Sci. U.S.A.">
        <title>The complete genome sequence of Chlorobium tepidum TLS, a photosynthetic, anaerobic, green-sulfur bacterium.</title>
        <authorList>
            <person name="Eisen J.A."/>
            <person name="Nelson K.E."/>
            <person name="Paulsen I.T."/>
            <person name="Heidelberg J.F."/>
            <person name="Wu M."/>
            <person name="Dodson R.J."/>
            <person name="DeBoy R.T."/>
            <person name="Gwinn M.L."/>
            <person name="Nelson W.C."/>
            <person name="Haft D.H."/>
            <person name="Hickey E.K."/>
            <person name="Peterson J.D."/>
            <person name="Durkin A.S."/>
            <person name="Kolonay J.F."/>
            <person name="Yang F."/>
            <person name="Holt I.E."/>
            <person name="Umayam L.A."/>
            <person name="Mason T.M."/>
            <person name="Brenner M."/>
            <person name="Shea T.P."/>
            <person name="Parksey D.S."/>
            <person name="Nierman W.C."/>
            <person name="Feldblyum T.V."/>
            <person name="Hansen C.L."/>
            <person name="Craven M.B."/>
            <person name="Radune D."/>
            <person name="Vamathevan J.J."/>
            <person name="Khouri H.M."/>
            <person name="White O."/>
            <person name="Gruber T.M."/>
            <person name="Ketchum K.A."/>
            <person name="Venter J.C."/>
            <person name="Tettelin H."/>
            <person name="Bryant D.A."/>
            <person name="Fraser C.M."/>
        </authorList>
    </citation>
    <scope>NUCLEOTIDE SEQUENCE [LARGE SCALE GENOMIC DNA]</scope>
    <source>
        <strain>ATCC 49652 / DSM 12025 / NBRC 103806 / TLS</strain>
    </source>
</reference>
<dbReference type="EMBL" id="AE006470">
    <property type="protein sequence ID" value="AAM72730.1"/>
    <property type="molecule type" value="Genomic_DNA"/>
</dbReference>
<dbReference type="RefSeq" id="NP_662388.1">
    <property type="nucleotide sequence ID" value="NC_002932.3"/>
</dbReference>
<dbReference type="RefSeq" id="WP_010933169.1">
    <property type="nucleotide sequence ID" value="NC_002932.3"/>
</dbReference>
<dbReference type="SMR" id="Q8KCC0"/>
<dbReference type="STRING" id="194439.CT1503"/>
<dbReference type="EnsemblBacteria" id="AAM72730">
    <property type="protein sequence ID" value="AAM72730"/>
    <property type="gene ID" value="CT1503"/>
</dbReference>
<dbReference type="KEGG" id="cte:CT1503"/>
<dbReference type="PATRIC" id="fig|194439.7.peg.1363"/>
<dbReference type="eggNOG" id="COG0249">
    <property type="taxonomic scope" value="Bacteria"/>
</dbReference>
<dbReference type="HOGENOM" id="CLU_002472_4_0_10"/>
<dbReference type="OrthoDB" id="9802448at2"/>
<dbReference type="Proteomes" id="UP000001007">
    <property type="component" value="Chromosome"/>
</dbReference>
<dbReference type="GO" id="GO:0005829">
    <property type="term" value="C:cytosol"/>
    <property type="evidence" value="ECO:0007669"/>
    <property type="project" value="TreeGrafter"/>
</dbReference>
<dbReference type="GO" id="GO:0005524">
    <property type="term" value="F:ATP binding"/>
    <property type="evidence" value="ECO:0007669"/>
    <property type="project" value="UniProtKB-UniRule"/>
</dbReference>
<dbReference type="GO" id="GO:0140664">
    <property type="term" value="F:ATP-dependent DNA damage sensor activity"/>
    <property type="evidence" value="ECO:0007669"/>
    <property type="project" value="InterPro"/>
</dbReference>
<dbReference type="GO" id="GO:0003684">
    <property type="term" value="F:damaged DNA binding"/>
    <property type="evidence" value="ECO:0007669"/>
    <property type="project" value="UniProtKB-UniRule"/>
</dbReference>
<dbReference type="GO" id="GO:0030983">
    <property type="term" value="F:mismatched DNA binding"/>
    <property type="evidence" value="ECO:0007669"/>
    <property type="project" value="InterPro"/>
</dbReference>
<dbReference type="GO" id="GO:0006298">
    <property type="term" value="P:mismatch repair"/>
    <property type="evidence" value="ECO:0007669"/>
    <property type="project" value="UniProtKB-UniRule"/>
</dbReference>
<dbReference type="CDD" id="cd03284">
    <property type="entry name" value="ABC_MutS1"/>
    <property type="match status" value="1"/>
</dbReference>
<dbReference type="FunFam" id="3.40.1170.10:FF:000001">
    <property type="entry name" value="DNA mismatch repair protein MutS"/>
    <property type="match status" value="1"/>
</dbReference>
<dbReference type="FunFam" id="3.40.50.300:FF:000870">
    <property type="entry name" value="MutS protein homolog 4"/>
    <property type="match status" value="1"/>
</dbReference>
<dbReference type="Gene3D" id="1.10.1420.10">
    <property type="match status" value="2"/>
</dbReference>
<dbReference type="Gene3D" id="3.40.1170.10">
    <property type="entry name" value="DNA repair protein MutS, domain I"/>
    <property type="match status" value="1"/>
</dbReference>
<dbReference type="Gene3D" id="3.30.420.110">
    <property type="entry name" value="MutS, connector domain"/>
    <property type="match status" value="1"/>
</dbReference>
<dbReference type="Gene3D" id="3.40.50.300">
    <property type="entry name" value="P-loop containing nucleotide triphosphate hydrolases"/>
    <property type="match status" value="1"/>
</dbReference>
<dbReference type="HAMAP" id="MF_00096">
    <property type="entry name" value="MutS"/>
    <property type="match status" value="1"/>
</dbReference>
<dbReference type="InterPro" id="IPR005748">
    <property type="entry name" value="DNA_mismatch_repair_MutS"/>
</dbReference>
<dbReference type="InterPro" id="IPR007695">
    <property type="entry name" value="DNA_mismatch_repair_MutS-lik_N"/>
</dbReference>
<dbReference type="InterPro" id="IPR017261">
    <property type="entry name" value="DNA_mismatch_repair_MutS/MSH"/>
</dbReference>
<dbReference type="InterPro" id="IPR000432">
    <property type="entry name" value="DNA_mismatch_repair_MutS_C"/>
</dbReference>
<dbReference type="InterPro" id="IPR007861">
    <property type="entry name" value="DNA_mismatch_repair_MutS_clamp"/>
</dbReference>
<dbReference type="InterPro" id="IPR007696">
    <property type="entry name" value="DNA_mismatch_repair_MutS_core"/>
</dbReference>
<dbReference type="InterPro" id="IPR016151">
    <property type="entry name" value="DNA_mismatch_repair_MutS_N"/>
</dbReference>
<dbReference type="InterPro" id="IPR036187">
    <property type="entry name" value="DNA_mismatch_repair_MutS_sf"/>
</dbReference>
<dbReference type="InterPro" id="IPR007860">
    <property type="entry name" value="DNA_mmatch_repair_MutS_con_dom"/>
</dbReference>
<dbReference type="InterPro" id="IPR045076">
    <property type="entry name" value="MutS"/>
</dbReference>
<dbReference type="InterPro" id="IPR036678">
    <property type="entry name" value="MutS_con_dom_sf"/>
</dbReference>
<dbReference type="InterPro" id="IPR027417">
    <property type="entry name" value="P-loop_NTPase"/>
</dbReference>
<dbReference type="NCBIfam" id="TIGR01070">
    <property type="entry name" value="mutS1"/>
    <property type="match status" value="1"/>
</dbReference>
<dbReference type="NCBIfam" id="NF003810">
    <property type="entry name" value="PRK05399.1"/>
    <property type="match status" value="1"/>
</dbReference>
<dbReference type="PANTHER" id="PTHR11361:SF34">
    <property type="entry name" value="DNA MISMATCH REPAIR PROTEIN MSH1, MITOCHONDRIAL"/>
    <property type="match status" value="1"/>
</dbReference>
<dbReference type="PANTHER" id="PTHR11361">
    <property type="entry name" value="DNA MISMATCH REPAIR PROTEIN MUTS FAMILY MEMBER"/>
    <property type="match status" value="1"/>
</dbReference>
<dbReference type="Pfam" id="PF01624">
    <property type="entry name" value="MutS_I"/>
    <property type="match status" value="1"/>
</dbReference>
<dbReference type="Pfam" id="PF05188">
    <property type="entry name" value="MutS_II"/>
    <property type="match status" value="1"/>
</dbReference>
<dbReference type="Pfam" id="PF05192">
    <property type="entry name" value="MutS_III"/>
    <property type="match status" value="1"/>
</dbReference>
<dbReference type="Pfam" id="PF05190">
    <property type="entry name" value="MutS_IV"/>
    <property type="match status" value="1"/>
</dbReference>
<dbReference type="Pfam" id="PF00488">
    <property type="entry name" value="MutS_V"/>
    <property type="match status" value="1"/>
</dbReference>
<dbReference type="PIRSF" id="PIRSF037677">
    <property type="entry name" value="DNA_mis_repair_Msh6"/>
    <property type="match status" value="1"/>
</dbReference>
<dbReference type="SMART" id="SM00534">
    <property type="entry name" value="MUTSac"/>
    <property type="match status" value="1"/>
</dbReference>
<dbReference type="SMART" id="SM00533">
    <property type="entry name" value="MUTSd"/>
    <property type="match status" value="1"/>
</dbReference>
<dbReference type="SUPFAM" id="SSF55271">
    <property type="entry name" value="DNA repair protein MutS, domain I"/>
    <property type="match status" value="1"/>
</dbReference>
<dbReference type="SUPFAM" id="SSF53150">
    <property type="entry name" value="DNA repair protein MutS, domain II"/>
    <property type="match status" value="1"/>
</dbReference>
<dbReference type="SUPFAM" id="SSF48334">
    <property type="entry name" value="DNA repair protein MutS, domain III"/>
    <property type="match status" value="1"/>
</dbReference>
<dbReference type="SUPFAM" id="SSF52540">
    <property type="entry name" value="P-loop containing nucleoside triphosphate hydrolases"/>
    <property type="match status" value="1"/>
</dbReference>
<dbReference type="PROSITE" id="PS00486">
    <property type="entry name" value="DNA_MISMATCH_REPAIR_2"/>
    <property type="match status" value="1"/>
</dbReference>
<evidence type="ECO:0000255" key="1">
    <source>
        <dbReference type="HAMAP-Rule" id="MF_00096"/>
    </source>
</evidence>
<sequence length="878" mass="97797">MAKSAQGRTKEPTPMMRQYLEVKERYPGYLLLFRVGDFYETFLDDAVTVSSALNIVLTRRSNGGAGEIPLAGFPHHASEGYIAKLVTKGFKVAVCDQVEDPALAKGIVKREITDIVTPGITYSDKILDDRHNNYLCAVAPVKRGREHMAGVAFVDVTTAEFRMTELPLGELKDFLQSLRPSEILISSRDKELRESLAKSLFSGALFTTLDEWMFTEEQAARVLENHFKTHSLKGFGIEGYEAGRIAAGVILQYLEEAKQGSLKYLVRIGLVESGETMTLDIQTCRNLEIISSMQDGSLNGSLLEVIDRTKNPMGARLLRRWLLHPLRKLEPVVRRHDAVGELLDAPEMREGIRGMLGGIIDLERALARIATSRAMPREVRQLGSSLAMIPQLKSLLEGSKSLRLRELALRLDPLPELAETIEKALDAEASGTLRDGGYIRAGYHAELDELRAISSGARDRLLEIQQQERQRTSISTLKVQYNKVFGYYIEVSRANSDKVPEYYEKKQTLVNAERYTIPALKEYEEKILTAEEKSQLLEHQLFQELCAMIAEQAASIQTTAAALAELDCLACFASCADEFGYCRPVMNEGTELSIRAGRHPVLERILGADEPYVANDCQVGSEQQLLIITGPNMAGKSSYLRQVGLVVLLAQVGCFVPAESAEIGLVDRIFTRVGASDNLTSGESTFLVEMNEAASILNNATERSLLLLDEIGRGTSTFDGMSIAWSMCEYIHDQLRSRTLFATHYHELAELESRFERIVNFNATVVETADTVIFLRKIVRGASDNSYGIEVAKMAGMPPEVIERAREILAGMERREVEVPVQRQALPLRVESRQISLFEEEESRLRKALSGIDINRLTPLDALMELKRLQEIALGKGA</sequence>
<keyword id="KW-0067">ATP-binding</keyword>
<keyword id="KW-0227">DNA damage</keyword>
<keyword id="KW-0234">DNA repair</keyword>
<keyword id="KW-0238">DNA-binding</keyword>
<keyword id="KW-0547">Nucleotide-binding</keyword>
<keyword id="KW-1185">Reference proteome</keyword>
<name>MUTS_CHLTE</name>
<protein>
    <recommendedName>
        <fullName evidence="1">DNA mismatch repair protein MutS</fullName>
    </recommendedName>
</protein>
<gene>
    <name evidence="1" type="primary">mutS</name>
    <name type="synonym">mutS1</name>
    <name type="ordered locus">CT1503</name>
</gene>
<feature type="chain" id="PRO_0000115086" description="DNA mismatch repair protein MutS">
    <location>
        <begin position="1"/>
        <end position="878"/>
    </location>
</feature>
<feature type="binding site" evidence="1">
    <location>
        <begin position="630"/>
        <end position="637"/>
    </location>
    <ligand>
        <name>ATP</name>
        <dbReference type="ChEBI" id="CHEBI:30616"/>
    </ligand>
</feature>
<proteinExistence type="inferred from homology"/>
<organism>
    <name type="scientific">Chlorobaculum tepidum (strain ATCC 49652 / DSM 12025 / NBRC 103806 / TLS)</name>
    <name type="common">Chlorobium tepidum</name>
    <dbReference type="NCBI Taxonomy" id="194439"/>
    <lineage>
        <taxon>Bacteria</taxon>
        <taxon>Pseudomonadati</taxon>
        <taxon>Chlorobiota</taxon>
        <taxon>Chlorobiia</taxon>
        <taxon>Chlorobiales</taxon>
        <taxon>Chlorobiaceae</taxon>
        <taxon>Chlorobaculum</taxon>
    </lineage>
</organism>
<comment type="function">
    <text evidence="1">This protein is involved in the repair of mismatches in DNA. It is possible that it carries out the mismatch recognition step. This protein has a weak ATPase activity.</text>
</comment>
<comment type="similarity">
    <text evidence="1">Belongs to the DNA mismatch repair MutS family.</text>
</comment>